<name>ASNA_STRP1</name>
<proteinExistence type="inferred from homology"/>
<evidence type="ECO:0000255" key="1">
    <source>
        <dbReference type="HAMAP-Rule" id="MF_00555"/>
    </source>
</evidence>
<keyword id="KW-0028">Amino-acid biosynthesis</keyword>
<keyword id="KW-0061">Asparagine biosynthesis</keyword>
<keyword id="KW-0067">ATP-binding</keyword>
<keyword id="KW-0963">Cytoplasm</keyword>
<keyword id="KW-0436">Ligase</keyword>
<keyword id="KW-0547">Nucleotide-binding</keyword>
<keyword id="KW-1185">Reference proteome</keyword>
<organism>
    <name type="scientific">Streptococcus pyogenes serotype M1</name>
    <dbReference type="NCBI Taxonomy" id="301447"/>
    <lineage>
        <taxon>Bacteria</taxon>
        <taxon>Bacillati</taxon>
        <taxon>Bacillota</taxon>
        <taxon>Bacilli</taxon>
        <taxon>Lactobacillales</taxon>
        <taxon>Streptococcaceae</taxon>
        <taxon>Streptococcus</taxon>
    </lineage>
</organism>
<reference key="1">
    <citation type="journal article" date="2001" name="Proc. Natl. Acad. Sci. U.S.A.">
        <title>Complete genome sequence of an M1 strain of Streptococcus pyogenes.</title>
        <authorList>
            <person name="Ferretti J.J."/>
            <person name="McShan W.M."/>
            <person name="Ajdic D.J."/>
            <person name="Savic D.J."/>
            <person name="Savic G."/>
            <person name="Lyon K."/>
            <person name="Primeaux C."/>
            <person name="Sezate S."/>
            <person name="Suvorov A.N."/>
            <person name="Kenton S."/>
            <person name="Lai H.S."/>
            <person name="Lin S.P."/>
            <person name="Qian Y."/>
            <person name="Jia H.G."/>
            <person name="Najar F.Z."/>
            <person name="Ren Q."/>
            <person name="Zhu H."/>
            <person name="Song L."/>
            <person name="White J."/>
            <person name="Yuan X."/>
            <person name="Clifton S.W."/>
            <person name="Roe B.A."/>
            <person name="McLaughlin R.E."/>
        </authorList>
    </citation>
    <scope>NUCLEOTIDE SEQUENCE [LARGE SCALE GENOMIC DNA]</scope>
    <source>
        <strain>ATCC 700294 / SF370 / Serotype M1</strain>
    </source>
</reference>
<reference key="2">
    <citation type="journal article" date="2005" name="J. Infect. Dis.">
        <title>Evolutionary origin and emergence of a highly successful clone of serotype M1 group A Streptococcus involved multiple horizontal gene transfer events.</title>
        <authorList>
            <person name="Sumby P."/>
            <person name="Porcella S.F."/>
            <person name="Madrigal A.G."/>
            <person name="Barbian K.D."/>
            <person name="Virtaneva K."/>
            <person name="Ricklefs S.M."/>
            <person name="Sturdevant D.E."/>
            <person name="Graham M.R."/>
            <person name="Vuopio-Varkila J."/>
            <person name="Hoe N.P."/>
            <person name="Musser J.M."/>
        </authorList>
    </citation>
    <scope>NUCLEOTIDE SEQUENCE [LARGE SCALE GENOMIC DNA]</scope>
    <source>
        <strain>ATCC BAA-947 / MGAS5005 / Serotype M1</strain>
    </source>
</reference>
<dbReference type="EC" id="6.3.1.1" evidence="1"/>
<dbReference type="EMBL" id="AE004092">
    <property type="protein sequence ID" value="AAK34333.1"/>
    <property type="molecule type" value="Genomic_DNA"/>
</dbReference>
<dbReference type="EMBL" id="CP000017">
    <property type="protein sequence ID" value="AAZ51887.1"/>
    <property type="molecule type" value="Genomic_DNA"/>
</dbReference>
<dbReference type="RefSeq" id="NP_269612.1">
    <property type="nucleotide sequence ID" value="NC_002737.2"/>
</dbReference>
<dbReference type="SMR" id="Q99YU0"/>
<dbReference type="PaxDb" id="1314-HKU360_01310"/>
<dbReference type="KEGG" id="spy:SPy_1539"/>
<dbReference type="KEGG" id="spz:M5005_Spy1269"/>
<dbReference type="PATRIC" id="fig|160490.10.peg.1346"/>
<dbReference type="HOGENOM" id="CLU_071543_0_0_9"/>
<dbReference type="OMA" id="QSRICMF"/>
<dbReference type="UniPathway" id="UPA00134">
    <property type="reaction ID" value="UER00194"/>
</dbReference>
<dbReference type="Proteomes" id="UP000000750">
    <property type="component" value="Chromosome"/>
</dbReference>
<dbReference type="GO" id="GO:0005829">
    <property type="term" value="C:cytosol"/>
    <property type="evidence" value="ECO:0007669"/>
    <property type="project" value="TreeGrafter"/>
</dbReference>
<dbReference type="GO" id="GO:0004071">
    <property type="term" value="F:aspartate-ammonia ligase activity"/>
    <property type="evidence" value="ECO:0007669"/>
    <property type="project" value="UniProtKB-UniRule"/>
</dbReference>
<dbReference type="GO" id="GO:0005524">
    <property type="term" value="F:ATP binding"/>
    <property type="evidence" value="ECO:0007669"/>
    <property type="project" value="UniProtKB-UniRule"/>
</dbReference>
<dbReference type="GO" id="GO:0140096">
    <property type="term" value="F:catalytic activity, acting on a protein"/>
    <property type="evidence" value="ECO:0007669"/>
    <property type="project" value="UniProtKB-ARBA"/>
</dbReference>
<dbReference type="GO" id="GO:0016740">
    <property type="term" value="F:transferase activity"/>
    <property type="evidence" value="ECO:0007669"/>
    <property type="project" value="UniProtKB-ARBA"/>
</dbReference>
<dbReference type="GO" id="GO:0070981">
    <property type="term" value="P:L-asparagine biosynthetic process"/>
    <property type="evidence" value="ECO:0007669"/>
    <property type="project" value="UniProtKB-UniRule"/>
</dbReference>
<dbReference type="CDD" id="cd00645">
    <property type="entry name" value="AsnA"/>
    <property type="match status" value="1"/>
</dbReference>
<dbReference type="Gene3D" id="3.30.930.10">
    <property type="entry name" value="Bira Bifunctional Protein, Domain 2"/>
    <property type="match status" value="1"/>
</dbReference>
<dbReference type="HAMAP" id="MF_00555">
    <property type="entry name" value="AsnA"/>
    <property type="match status" value="1"/>
</dbReference>
<dbReference type="InterPro" id="IPR006195">
    <property type="entry name" value="aa-tRNA-synth_II"/>
</dbReference>
<dbReference type="InterPro" id="IPR045864">
    <property type="entry name" value="aa-tRNA-synth_II/BPL/LPL"/>
</dbReference>
<dbReference type="InterPro" id="IPR004618">
    <property type="entry name" value="AsnA"/>
</dbReference>
<dbReference type="NCBIfam" id="TIGR00669">
    <property type="entry name" value="asnA"/>
    <property type="match status" value="1"/>
</dbReference>
<dbReference type="PANTHER" id="PTHR30073">
    <property type="entry name" value="ASPARTATE--AMMONIA LIGASE"/>
    <property type="match status" value="1"/>
</dbReference>
<dbReference type="PANTHER" id="PTHR30073:SF5">
    <property type="entry name" value="ASPARTATE--AMMONIA LIGASE"/>
    <property type="match status" value="1"/>
</dbReference>
<dbReference type="Pfam" id="PF03590">
    <property type="entry name" value="AsnA"/>
    <property type="match status" value="1"/>
</dbReference>
<dbReference type="PIRSF" id="PIRSF001555">
    <property type="entry name" value="Asp_ammon_ligase"/>
    <property type="match status" value="1"/>
</dbReference>
<dbReference type="SUPFAM" id="SSF55681">
    <property type="entry name" value="Class II aaRS and biotin synthetases"/>
    <property type="match status" value="1"/>
</dbReference>
<dbReference type="PROSITE" id="PS50862">
    <property type="entry name" value="AA_TRNA_LIGASE_II"/>
    <property type="match status" value="1"/>
</dbReference>
<gene>
    <name evidence="1" type="primary">asnA</name>
    <name type="ordered locus">SPy_1539</name>
    <name type="ordered locus">M5005_Spy1269</name>
</gene>
<protein>
    <recommendedName>
        <fullName evidence="1">Aspartate--ammonia ligase</fullName>
        <ecNumber evidence="1">6.3.1.1</ecNumber>
    </recommendedName>
    <alternativeName>
        <fullName evidence="1">Asparagine synthetase A</fullName>
    </alternativeName>
</protein>
<feature type="chain" id="PRO_0000195893" description="Aspartate--ammonia ligase">
    <location>
        <begin position="1"/>
        <end position="330"/>
    </location>
</feature>
<sequence>MKKSFIHQQEEISFVKNTFTQYLIAKLDVVEVQGPILSRVGDGMQDNLSGTENPVSVNVLKIPNATFEVVHSLAKWKRHTLARFGFNEGEGLVVNMKALRPDEDSLDQTHSVYVDQWDWEKVIPDGKRNLAYLKETVETIYKVIRLTELAVEARYDIEAVLPKKITFIHTEELVAKYPDLTPKERENAITKEFGAVFLIGIGGVLPDGKPHDGRAPDYDDWTTETENGYHGLNGDILVWNDQLGSAFELSSMGIRVDEEALKRQVEMTGDQDRLGFDWHKSLLNGLFPLTIGGGIGQSRMVMFLLRKQHIGEVQTSVWPQEVRDSYDNIL</sequence>
<accession>Q99YU0</accession>
<accession>Q48XN8</accession>
<comment type="catalytic activity">
    <reaction evidence="1">
        <text>L-aspartate + NH4(+) + ATP = L-asparagine + AMP + diphosphate + H(+)</text>
        <dbReference type="Rhea" id="RHEA:11372"/>
        <dbReference type="ChEBI" id="CHEBI:15378"/>
        <dbReference type="ChEBI" id="CHEBI:28938"/>
        <dbReference type="ChEBI" id="CHEBI:29991"/>
        <dbReference type="ChEBI" id="CHEBI:30616"/>
        <dbReference type="ChEBI" id="CHEBI:33019"/>
        <dbReference type="ChEBI" id="CHEBI:58048"/>
        <dbReference type="ChEBI" id="CHEBI:456215"/>
        <dbReference type="EC" id="6.3.1.1"/>
    </reaction>
</comment>
<comment type="pathway">
    <text evidence="1">Amino-acid biosynthesis; L-asparagine biosynthesis; L-asparagine from L-aspartate (ammonia route): step 1/1.</text>
</comment>
<comment type="subcellular location">
    <subcellularLocation>
        <location evidence="1">Cytoplasm</location>
    </subcellularLocation>
</comment>
<comment type="similarity">
    <text evidence="1">Belongs to the class-II aminoacyl-tRNA synthetase family. AsnA subfamily.</text>
</comment>